<comment type="function">
    <text evidence="1">Involved in the binding of tRNA to the ribosomes.</text>
</comment>
<comment type="subunit">
    <text evidence="1">Part of the 30S ribosomal subunit.</text>
</comment>
<comment type="similarity">
    <text evidence="1">Belongs to the universal ribosomal protein uS10 family.</text>
</comment>
<sequence length="102" mass="11612">MANKKIRIRLKAYEHRTLDTAAAKIVETATRTGAEVAGPIPLPTERSLYTIIRATHKYKDSREQFEMRTHKRLIDIINPTQKTVDALMKLDLPSGVNVEIKL</sequence>
<evidence type="ECO:0000255" key="1">
    <source>
        <dbReference type="HAMAP-Rule" id="MF_00508"/>
    </source>
</evidence>
<evidence type="ECO:0000305" key="2"/>
<keyword id="KW-1185">Reference proteome</keyword>
<keyword id="KW-0687">Ribonucleoprotein</keyword>
<keyword id="KW-0689">Ribosomal protein</keyword>
<name>RS10_STRGC</name>
<proteinExistence type="inferred from homology"/>
<accession>A8AZM6</accession>
<organism>
    <name type="scientific">Streptococcus gordonii (strain Challis / ATCC 35105 / BCRC 15272 / CH1 / DL1 / V288)</name>
    <dbReference type="NCBI Taxonomy" id="467705"/>
    <lineage>
        <taxon>Bacteria</taxon>
        <taxon>Bacillati</taxon>
        <taxon>Bacillota</taxon>
        <taxon>Bacilli</taxon>
        <taxon>Lactobacillales</taxon>
        <taxon>Streptococcaceae</taxon>
        <taxon>Streptococcus</taxon>
    </lineage>
</organism>
<feature type="chain" id="PRO_1000081574" description="Small ribosomal subunit protein uS10">
    <location>
        <begin position="1"/>
        <end position="102"/>
    </location>
</feature>
<gene>
    <name evidence="1" type="primary">rpsJ</name>
    <name type="ordered locus">SGO_1986</name>
</gene>
<protein>
    <recommendedName>
        <fullName evidence="1">Small ribosomal subunit protein uS10</fullName>
    </recommendedName>
    <alternativeName>
        <fullName evidence="2">30S ribosomal protein S10</fullName>
    </alternativeName>
</protein>
<dbReference type="EMBL" id="CP000725">
    <property type="protein sequence ID" value="ABV10132.1"/>
    <property type="molecule type" value="Genomic_DNA"/>
</dbReference>
<dbReference type="RefSeq" id="WP_002894478.1">
    <property type="nucleotide sequence ID" value="NC_009785.1"/>
</dbReference>
<dbReference type="SMR" id="A8AZM6"/>
<dbReference type="STRING" id="467705.SGO_1986"/>
<dbReference type="GeneID" id="93964200"/>
<dbReference type="KEGG" id="sgo:SGO_1986"/>
<dbReference type="eggNOG" id="COG0051">
    <property type="taxonomic scope" value="Bacteria"/>
</dbReference>
<dbReference type="HOGENOM" id="CLU_122625_1_3_9"/>
<dbReference type="Proteomes" id="UP000001131">
    <property type="component" value="Chromosome"/>
</dbReference>
<dbReference type="GO" id="GO:1990904">
    <property type="term" value="C:ribonucleoprotein complex"/>
    <property type="evidence" value="ECO:0007669"/>
    <property type="project" value="UniProtKB-KW"/>
</dbReference>
<dbReference type="GO" id="GO:0005840">
    <property type="term" value="C:ribosome"/>
    <property type="evidence" value="ECO:0007669"/>
    <property type="project" value="UniProtKB-KW"/>
</dbReference>
<dbReference type="GO" id="GO:0003735">
    <property type="term" value="F:structural constituent of ribosome"/>
    <property type="evidence" value="ECO:0007669"/>
    <property type="project" value="InterPro"/>
</dbReference>
<dbReference type="GO" id="GO:0000049">
    <property type="term" value="F:tRNA binding"/>
    <property type="evidence" value="ECO:0007669"/>
    <property type="project" value="UniProtKB-UniRule"/>
</dbReference>
<dbReference type="GO" id="GO:0006412">
    <property type="term" value="P:translation"/>
    <property type="evidence" value="ECO:0007669"/>
    <property type="project" value="UniProtKB-UniRule"/>
</dbReference>
<dbReference type="FunFam" id="3.30.70.600:FF:000001">
    <property type="entry name" value="30S ribosomal protein S10"/>
    <property type="match status" value="1"/>
</dbReference>
<dbReference type="Gene3D" id="3.30.70.600">
    <property type="entry name" value="Ribosomal protein S10 domain"/>
    <property type="match status" value="1"/>
</dbReference>
<dbReference type="HAMAP" id="MF_00508">
    <property type="entry name" value="Ribosomal_uS10"/>
    <property type="match status" value="1"/>
</dbReference>
<dbReference type="InterPro" id="IPR001848">
    <property type="entry name" value="Ribosomal_uS10"/>
</dbReference>
<dbReference type="InterPro" id="IPR018268">
    <property type="entry name" value="Ribosomal_uS10_CS"/>
</dbReference>
<dbReference type="InterPro" id="IPR027486">
    <property type="entry name" value="Ribosomal_uS10_dom"/>
</dbReference>
<dbReference type="InterPro" id="IPR036838">
    <property type="entry name" value="Ribosomal_uS10_dom_sf"/>
</dbReference>
<dbReference type="NCBIfam" id="NF001861">
    <property type="entry name" value="PRK00596.1"/>
    <property type="match status" value="1"/>
</dbReference>
<dbReference type="NCBIfam" id="TIGR01049">
    <property type="entry name" value="rpsJ_bact"/>
    <property type="match status" value="1"/>
</dbReference>
<dbReference type="PANTHER" id="PTHR11700">
    <property type="entry name" value="30S RIBOSOMAL PROTEIN S10 FAMILY MEMBER"/>
    <property type="match status" value="1"/>
</dbReference>
<dbReference type="Pfam" id="PF00338">
    <property type="entry name" value="Ribosomal_S10"/>
    <property type="match status" value="1"/>
</dbReference>
<dbReference type="PRINTS" id="PR00971">
    <property type="entry name" value="RIBOSOMALS10"/>
</dbReference>
<dbReference type="SMART" id="SM01403">
    <property type="entry name" value="Ribosomal_S10"/>
    <property type="match status" value="1"/>
</dbReference>
<dbReference type="SUPFAM" id="SSF54999">
    <property type="entry name" value="Ribosomal protein S10"/>
    <property type="match status" value="1"/>
</dbReference>
<dbReference type="PROSITE" id="PS00361">
    <property type="entry name" value="RIBOSOMAL_S10"/>
    <property type="match status" value="1"/>
</dbReference>
<reference key="1">
    <citation type="journal article" date="2007" name="J. Bacteriol.">
        <title>Genome-wide transcriptional changes in Streptococcus gordonii in response to competence signaling peptide.</title>
        <authorList>
            <person name="Vickerman M.M."/>
            <person name="Iobst S."/>
            <person name="Jesionowski A.M."/>
            <person name="Gill S.R."/>
        </authorList>
    </citation>
    <scope>NUCLEOTIDE SEQUENCE [LARGE SCALE GENOMIC DNA]</scope>
    <source>
        <strain>Challis / ATCC 35105 / BCRC 15272 / CH1 / DL1 / V288</strain>
    </source>
</reference>